<evidence type="ECO:0000255" key="1">
    <source>
        <dbReference type="PROSITE-ProRule" id="PRU00267"/>
    </source>
</evidence>
<evidence type="ECO:0000256" key="2">
    <source>
        <dbReference type="SAM" id="MobiDB-lite"/>
    </source>
</evidence>
<evidence type="ECO:0000269" key="3">
    <source>
    </source>
</evidence>
<evidence type="ECO:0000269" key="4">
    <source>
    </source>
</evidence>
<evidence type="ECO:0000269" key="5">
    <source>
    </source>
</evidence>
<evidence type="ECO:0000303" key="6">
    <source>
    </source>
</evidence>
<evidence type="ECO:0000305" key="7"/>
<gene>
    <name type="primary">HMGB7</name>
    <name type="synonym">HMGB6</name>
    <name evidence="6" type="synonym">NFD7</name>
    <name type="ordered locus">At5g23420</name>
    <name type="ORF">K19M13.4</name>
</gene>
<reference key="1">
    <citation type="journal article" date="1999" name="DNA Res.">
        <title>Structural analysis of Arabidopsis thaliana chromosome 5. IX. Sequence features of the regions of 1,011,550 bp covered by seventeen P1 and TAC clones.</title>
        <authorList>
            <person name="Kaneko T."/>
            <person name="Katoh T."/>
            <person name="Sato S."/>
            <person name="Nakamura Y."/>
            <person name="Asamizu E."/>
            <person name="Kotani H."/>
            <person name="Miyajima N."/>
            <person name="Tabata S."/>
        </authorList>
    </citation>
    <scope>NUCLEOTIDE SEQUENCE [LARGE SCALE GENOMIC DNA]</scope>
    <source>
        <strain>cv. Columbia</strain>
    </source>
</reference>
<reference key="2">
    <citation type="journal article" date="2017" name="Plant J.">
        <title>Araport11: a complete reannotation of the Arabidopsis thaliana reference genome.</title>
        <authorList>
            <person name="Cheng C.Y."/>
            <person name="Krishnakumar V."/>
            <person name="Chan A.P."/>
            <person name="Thibaud-Nissen F."/>
            <person name="Schobel S."/>
            <person name="Town C.D."/>
        </authorList>
    </citation>
    <scope>GENOME REANNOTATION</scope>
    <source>
        <strain>cv. Columbia</strain>
    </source>
</reference>
<reference key="3">
    <citation type="journal article" date="2002" name="Science">
        <title>Functional annotation of a full-length Arabidopsis cDNA collection.</title>
        <authorList>
            <person name="Seki M."/>
            <person name="Narusaka M."/>
            <person name="Kamiya A."/>
            <person name="Ishida J."/>
            <person name="Satou M."/>
            <person name="Sakurai T."/>
            <person name="Nakajima M."/>
            <person name="Enju A."/>
            <person name="Akiyama K."/>
            <person name="Oono Y."/>
            <person name="Muramatsu M."/>
            <person name="Hayashizaki Y."/>
            <person name="Kawai J."/>
            <person name="Carninci P."/>
            <person name="Itoh M."/>
            <person name="Ishii Y."/>
            <person name="Arakawa T."/>
            <person name="Shibata K."/>
            <person name="Shinagawa A."/>
            <person name="Shinozaki K."/>
        </authorList>
    </citation>
    <scope>NUCLEOTIDE SEQUENCE [LARGE SCALE MRNA]</scope>
    <source>
        <strain>cv. Columbia</strain>
    </source>
</reference>
<reference key="4">
    <citation type="submission" date="2002-03" db="EMBL/GenBank/DDBJ databases">
        <title>Full-length cDNA from Arabidopsis thaliana.</title>
        <authorList>
            <person name="Brover V.V."/>
            <person name="Troukhan M.E."/>
            <person name="Alexandrov N.A."/>
            <person name="Lu Y.-P."/>
            <person name="Flavell R.B."/>
            <person name="Feldmann K.A."/>
        </authorList>
    </citation>
    <scope>NUCLEOTIDE SEQUENCE [LARGE SCALE MRNA]</scope>
    <source>
        <strain>cv. Columbia</strain>
    </source>
</reference>
<reference key="5">
    <citation type="journal article" date="2004" name="Biochemistry">
        <title>HMGB6 from Arabidopsis thaliana specifies a novel type of plant chromosomal HMGB protein.</title>
        <authorList>
            <person name="Grasser K.D."/>
            <person name="Grill S."/>
            <person name="Duroux M."/>
            <person name="Launholt D."/>
            <person name="Thomsen M.S."/>
            <person name="Nielsen B.V."/>
            <person name="Nielsen H.K."/>
            <person name="Merkle T."/>
        </authorList>
    </citation>
    <scope>FUNCTION</scope>
    <scope>SUBCELLULAR LOCATION</scope>
    <scope>PHOSPHORYLATION</scope>
</reference>
<reference key="6">
    <citation type="journal article" date="2006" name="Plant Physiol.">
        <title>NUCLEAR FUSION DEFECTIVE1 encodes the Arabidopsis RPL21M protein and is required for karyogamy during female gametophyte development and fertilization.</title>
        <authorList>
            <person name="Portereiko M.F."/>
            <person name="Sandaklie-Nikolova L."/>
            <person name="Lloyd A."/>
            <person name="Dever C.A."/>
            <person name="Otsuga D."/>
            <person name="Drews G.N."/>
        </authorList>
    </citation>
    <scope>FUNCTION</scope>
    <scope>DISRUPTION PHENOTYPE</scope>
    <source>
        <strain>cv. Columbia</strain>
    </source>
</reference>
<reference key="7">
    <citation type="journal article" date="2007" name="FEBS Lett.">
        <title>Overlapping expression patterns among the genes encoding Arabidopsis chromosomal high mobility group (HMG) proteins.</title>
        <authorList>
            <person name="Launholt D."/>
            <person name="Groenlund J.T."/>
            <person name="Nielsen H.K."/>
            <person name="Grasser K.D."/>
        </authorList>
    </citation>
    <scope>TISSUE SPECIFICITY</scope>
</reference>
<reference key="8">
    <citation type="journal article" date="2010" name="Biochim. Biophys. Acta">
        <title>The role of chromosomal HMGB proteins in plants.</title>
        <authorList>
            <person name="Pedersen D.S."/>
            <person name="Grasser K.D."/>
        </authorList>
    </citation>
    <scope>REVIEW</scope>
</reference>
<feature type="chain" id="PRO_0000399933" description="High mobility group B protein 7">
    <location>
        <begin position="1"/>
        <end position="241"/>
    </location>
</feature>
<feature type="DNA-binding region" description="HMG box" evidence="1">
    <location>
        <begin position="115"/>
        <end position="183"/>
    </location>
</feature>
<feature type="region of interest" description="Disordered" evidence="2">
    <location>
        <begin position="1"/>
        <end position="30"/>
    </location>
</feature>
<feature type="region of interest" description="Disordered" evidence="2">
    <location>
        <begin position="75"/>
        <end position="116"/>
    </location>
</feature>
<feature type="region of interest" description="Disordered" evidence="2">
    <location>
        <begin position="174"/>
        <end position="241"/>
    </location>
</feature>
<feature type="compositionally biased region" description="Polar residues" evidence="2">
    <location>
        <begin position="1"/>
        <end position="11"/>
    </location>
</feature>
<feature type="compositionally biased region" description="Polar residues" evidence="2">
    <location>
        <begin position="20"/>
        <end position="29"/>
    </location>
</feature>
<feature type="compositionally biased region" description="Basic and acidic residues" evidence="2">
    <location>
        <begin position="77"/>
        <end position="90"/>
    </location>
</feature>
<feature type="compositionally biased region" description="Acidic residues" evidence="2">
    <location>
        <begin position="182"/>
        <end position="221"/>
    </location>
</feature>
<feature type="compositionally biased region" description="Acidic residues" evidence="2">
    <location>
        <begin position="229"/>
        <end position="241"/>
    </location>
</feature>
<organism>
    <name type="scientific">Arabidopsis thaliana</name>
    <name type="common">Mouse-ear cress</name>
    <dbReference type="NCBI Taxonomy" id="3702"/>
    <lineage>
        <taxon>Eukaryota</taxon>
        <taxon>Viridiplantae</taxon>
        <taxon>Streptophyta</taxon>
        <taxon>Embryophyta</taxon>
        <taxon>Tracheophyta</taxon>
        <taxon>Spermatophyta</taxon>
        <taxon>Magnoliopsida</taxon>
        <taxon>eudicotyledons</taxon>
        <taxon>Gunneridae</taxon>
        <taxon>Pentapetalae</taxon>
        <taxon>rosids</taxon>
        <taxon>malvids</taxon>
        <taxon>Brassicales</taxon>
        <taxon>Brassicaceae</taxon>
        <taxon>Camelineae</taxon>
        <taxon>Arabidopsis</taxon>
    </lineage>
</organism>
<comment type="function">
    <text evidence="3 4">Binds preferentially double-stranded supercoiled DNA (PubMed:14756567). Required for karyogamy during female gametophyte development, when the two polar nuclei fuse to form the diploid central cell nucleus (PubMed:16698901).</text>
</comment>
<comment type="subcellular location">
    <subcellularLocation>
        <location evidence="1 3">Nucleus</location>
    </subcellularLocation>
</comment>
<comment type="alternative products">
    <event type="alternative splicing"/>
    <isoform>
        <id>Q8LDF9-1</id>
        <name>1</name>
        <sequence type="displayed"/>
    </isoform>
    <text>A number of isoforms are produced. According to EST sequences.</text>
</comment>
<comment type="tissue specificity">
    <text evidence="5">Expressed at low levels in lateral roots, root tips, cotyledons, leaves and flowers (including pedicels, but excluding styles).</text>
</comment>
<comment type="PTM">
    <text evidence="3">Phosphorylated.</text>
</comment>
<comment type="disruption phenotype">
    <text evidence="4">Failure of fusion of the polar nuclei during megagametogenesis.</text>
</comment>
<comment type="similarity">
    <text evidence="7">Belongs to the HMGB family.</text>
</comment>
<comment type="sequence caution" evidence="7">
    <conflict type="erroneous gene model prediction">
        <sequence resource="EMBL-CDS" id="BAB09558"/>
    </conflict>
</comment>
<keyword id="KW-0025">Alternative splicing</keyword>
<keyword id="KW-0217">Developmental protein</keyword>
<keyword id="KW-0238">DNA-binding</keyword>
<keyword id="KW-0415">Karyogamy</keyword>
<keyword id="KW-0539">Nucleus</keyword>
<keyword id="KW-0597">Phosphoprotein</keyword>
<keyword id="KW-1185">Reference proteome</keyword>
<name>HMGB7_ARATH</name>
<proteinExistence type="evidence at protein level"/>
<accession>Q8LDF9</accession>
<accession>Q9FHL6</accession>
<protein>
    <recommendedName>
        <fullName>High mobility group B protein 7</fullName>
    </recommendedName>
    <alternativeName>
        <fullName>Nucleosome/chromatin assembly factor group D 07</fullName>
        <shortName>Nucleosome/chromatin assembly factor group D 7</shortName>
    </alternativeName>
    <alternativeName>
        <fullName evidence="6">Protein NUCLEAR FUSION DEFECTIVE 7</fullName>
    </alternativeName>
</protein>
<dbReference type="EMBL" id="AB018110">
    <property type="protein sequence ID" value="BAB09558.1"/>
    <property type="status" value="ALT_SEQ"/>
    <property type="molecule type" value="Genomic_DNA"/>
</dbReference>
<dbReference type="EMBL" id="CP002688">
    <property type="protein sequence ID" value="AED93164.1"/>
    <property type="molecule type" value="Genomic_DNA"/>
</dbReference>
<dbReference type="EMBL" id="AK118688">
    <property type="protein sequence ID" value="BAC43282.1"/>
    <property type="molecule type" value="mRNA"/>
</dbReference>
<dbReference type="EMBL" id="AY086023">
    <property type="protein sequence ID" value="AAM63233.1"/>
    <property type="molecule type" value="mRNA"/>
</dbReference>
<dbReference type="RefSeq" id="NP_568431.1">
    <molecule id="Q8LDF9-1"/>
    <property type="nucleotide sequence ID" value="NM_122249.4"/>
</dbReference>
<dbReference type="SMR" id="Q8LDF9"/>
<dbReference type="FunCoup" id="Q8LDF9">
    <property type="interactions" value="914"/>
</dbReference>
<dbReference type="STRING" id="3702.Q8LDF9"/>
<dbReference type="iPTMnet" id="Q8LDF9"/>
<dbReference type="PaxDb" id="3702-AT5G23420.1"/>
<dbReference type="ProteomicsDB" id="228806">
    <molecule id="Q8LDF9-1"/>
</dbReference>
<dbReference type="EnsemblPlants" id="AT5G23420.1">
    <molecule id="Q8LDF9-1"/>
    <property type="protein sequence ID" value="AT5G23420.1"/>
    <property type="gene ID" value="AT5G23420"/>
</dbReference>
<dbReference type="GeneID" id="832408"/>
<dbReference type="Gramene" id="AT5G23420.1">
    <molecule id="Q8LDF9-1"/>
    <property type="protein sequence ID" value="AT5G23420.1"/>
    <property type="gene ID" value="AT5G23420"/>
</dbReference>
<dbReference type="KEGG" id="ath:AT5G23420"/>
<dbReference type="Araport" id="AT5G23420"/>
<dbReference type="TAIR" id="AT5G23420">
    <property type="gene designation" value="HMGB6"/>
</dbReference>
<dbReference type="eggNOG" id="KOG0381">
    <property type="taxonomic scope" value="Eukaryota"/>
</dbReference>
<dbReference type="HOGENOM" id="CLU_097693_0_0_1"/>
<dbReference type="InParanoid" id="Q8LDF9"/>
<dbReference type="OMA" id="NANVGSC"/>
<dbReference type="PhylomeDB" id="Q8LDF9"/>
<dbReference type="PRO" id="PR:Q8LDF9"/>
<dbReference type="Proteomes" id="UP000006548">
    <property type="component" value="Chromosome 5"/>
</dbReference>
<dbReference type="ExpressionAtlas" id="Q8LDF9">
    <property type="expression patterns" value="baseline and differential"/>
</dbReference>
<dbReference type="GO" id="GO:0005634">
    <property type="term" value="C:nucleus"/>
    <property type="evidence" value="ECO:0000314"/>
    <property type="project" value="TAIR"/>
</dbReference>
<dbReference type="GO" id="GO:0003677">
    <property type="term" value="F:DNA binding"/>
    <property type="evidence" value="ECO:0000314"/>
    <property type="project" value="TAIR"/>
</dbReference>
<dbReference type="GO" id="GO:0003700">
    <property type="term" value="F:DNA-binding transcription factor activity"/>
    <property type="evidence" value="ECO:0000250"/>
    <property type="project" value="TAIR"/>
</dbReference>
<dbReference type="GO" id="GO:0000741">
    <property type="term" value="P:karyogamy"/>
    <property type="evidence" value="ECO:0000315"/>
    <property type="project" value="UniProtKB"/>
</dbReference>
<dbReference type="GO" id="GO:0010197">
    <property type="term" value="P:polar nucleus fusion"/>
    <property type="evidence" value="ECO:0000315"/>
    <property type="project" value="UniProtKB"/>
</dbReference>
<dbReference type="CDD" id="cd22005">
    <property type="entry name" value="HMG-box_AtHMGB1-like"/>
    <property type="match status" value="1"/>
</dbReference>
<dbReference type="Gene3D" id="1.10.30.10">
    <property type="entry name" value="High mobility group box domain"/>
    <property type="match status" value="1"/>
</dbReference>
<dbReference type="InterPro" id="IPR009071">
    <property type="entry name" value="HMG_box_dom"/>
</dbReference>
<dbReference type="InterPro" id="IPR036910">
    <property type="entry name" value="HMG_box_dom_sf"/>
</dbReference>
<dbReference type="PANTHER" id="PTHR47658">
    <property type="entry name" value="HIGH MOBILITY GROUP B PROTEIN 12-RELATED"/>
    <property type="match status" value="1"/>
</dbReference>
<dbReference type="PANTHER" id="PTHR47658:SF1">
    <property type="entry name" value="MEIOSIS INITIATOR PROTEIN"/>
    <property type="match status" value="1"/>
</dbReference>
<dbReference type="Pfam" id="PF00505">
    <property type="entry name" value="HMG_box"/>
    <property type="match status" value="1"/>
</dbReference>
<dbReference type="SMART" id="SM00398">
    <property type="entry name" value="HMG"/>
    <property type="match status" value="1"/>
</dbReference>
<dbReference type="SUPFAM" id="SSF47095">
    <property type="entry name" value="HMG-box"/>
    <property type="match status" value="1"/>
</dbReference>
<dbReference type="PROSITE" id="PS50118">
    <property type="entry name" value="HMG_BOX_2"/>
    <property type="match status" value="1"/>
</dbReference>
<sequence>MAGPSTTSNAPKQRKRVEAETSSNTSTTLRRAKDGSAFALCEGCNKSVAVALISMHNCSLDAKIRVNLEAQVVETQAEAKKKPAEKKKTTSDGPKPKRLKKTNDEKKSSSTSNKPKRPLTAFFIFMSDFRKTFKSEHNGSLAKDAAKIGGEKWKSLTEEEKKVYLDKAAELKAEYNKSLESNDADEEEEDEEKQSDDVDDAEEKQVDDDDEVEEKEVENTDDDKKEAEGKEEEEEEILDDY</sequence>